<feature type="chain" id="PRO_0000266058" description="CTP synthase">
    <location>
        <begin position="1"/>
        <end position="535"/>
    </location>
</feature>
<feature type="domain" description="Glutamine amidotransferase type-1" evidence="1">
    <location>
        <begin position="292"/>
        <end position="534"/>
    </location>
</feature>
<feature type="region of interest" description="Amidoligase domain" evidence="1">
    <location>
        <begin position="1"/>
        <end position="267"/>
    </location>
</feature>
<feature type="active site" description="Nucleophile; for glutamine hydrolysis" evidence="1">
    <location>
        <position position="381"/>
    </location>
</feature>
<feature type="active site" evidence="1">
    <location>
        <position position="507"/>
    </location>
</feature>
<feature type="active site" evidence="1">
    <location>
        <position position="509"/>
    </location>
</feature>
<feature type="binding site" evidence="1">
    <location>
        <position position="13"/>
    </location>
    <ligand>
        <name>CTP</name>
        <dbReference type="ChEBI" id="CHEBI:37563"/>
        <note>allosteric inhibitor</note>
    </ligand>
</feature>
<feature type="binding site" evidence="1">
    <location>
        <position position="13"/>
    </location>
    <ligand>
        <name>UTP</name>
        <dbReference type="ChEBI" id="CHEBI:46398"/>
    </ligand>
</feature>
<feature type="binding site" evidence="1">
    <location>
        <begin position="14"/>
        <end position="19"/>
    </location>
    <ligand>
        <name>ATP</name>
        <dbReference type="ChEBI" id="CHEBI:30616"/>
    </ligand>
</feature>
<feature type="binding site" evidence="1">
    <location>
        <position position="54"/>
    </location>
    <ligand>
        <name>L-glutamine</name>
        <dbReference type="ChEBI" id="CHEBI:58359"/>
    </ligand>
</feature>
<feature type="binding site" evidence="1">
    <location>
        <position position="71"/>
    </location>
    <ligand>
        <name>ATP</name>
        <dbReference type="ChEBI" id="CHEBI:30616"/>
    </ligand>
</feature>
<feature type="binding site" evidence="1">
    <location>
        <position position="71"/>
    </location>
    <ligand>
        <name>Mg(2+)</name>
        <dbReference type="ChEBI" id="CHEBI:18420"/>
    </ligand>
</feature>
<feature type="binding site" evidence="1">
    <location>
        <position position="141"/>
    </location>
    <ligand>
        <name>Mg(2+)</name>
        <dbReference type="ChEBI" id="CHEBI:18420"/>
    </ligand>
</feature>
<feature type="binding site" evidence="1">
    <location>
        <begin position="148"/>
        <end position="150"/>
    </location>
    <ligand>
        <name>CTP</name>
        <dbReference type="ChEBI" id="CHEBI:37563"/>
        <note>allosteric inhibitor</note>
    </ligand>
</feature>
<feature type="binding site" evidence="1">
    <location>
        <begin position="188"/>
        <end position="193"/>
    </location>
    <ligand>
        <name>CTP</name>
        <dbReference type="ChEBI" id="CHEBI:37563"/>
        <note>allosteric inhibitor</note>
    </ligand>
</feature>
<feature type="binding site" evidence="1">
    <location>
        <begin position="188"/>
        <end position="193"/>
    </location>
    <ligand>
        <name>UTP</name>
        <dbReference type="ChEBI" id="CHEBI:46398"/>
    </ligand>
</feature>
<feature type="binding site" evidence="1">
    <location>
        <position position="224"/>
    </location>
    <ligand>
        <name>CTP</name>
        <dbReference type="ChEBI" id="CHEBI:37563"/>
        <note>allosteric inhibitor</note>
    </ligand>
</feature>
<feature type="binding site" evidence="1">
    <location>
        <position position="224"/>
    </location>
    <ligand>
        <name>UTP</name>
        <dbReference type="ChEBI" id="CHEBI:46398"/>
    </ligand>
</feature>
<feature type="binding site" evidence="1">
    <location>
        <begin position="240"/>
        <end position="242"/>
    </location>
    <ligand>
        <name>ATP</name>
        <dbReference type="ChEBI" id="CHEBI:30616"/>
    </ligand>
</feature>
<feature type="binding site" evidence="1">
    <location>
        <position position="354"/>
    </location>
    <ligand>
        <name>L-glutamine</name>
        <dbReference type="ChEBI" id="CHEBI:58359"/>
    </ligand>
</feature>
<feature type="binding site" evidence="1">
    <location>
        <begin position="382"/>
        <end position="385"/>
    </location>
    <ligand>
        <name>L-glutamine</name>
        <dbReference type="ChEBI" id="CHEBI:58359"/>
    </ligand>
</feature>
<feature type="binding site" evidence="1">
    <location>
        <position position="405"/>
    </location>
    <ligand>
        <name>L-glutamine</name>
        <dbReference type="ChEBI" id="CHEBI:58359"/>
    </ligand>
</feature>
<feature type="binding site" evidence="1">
    <location>
        <position position="462"/>
    </location>
    <ligand>
        <name>L-glutamine</name>
        <dbReference type="ChEBI" id="CHEBI:58359"/>
    </ligand>
</feature>
<comment type="function">
    <text evidence="1">Catalyzes the ATP-dependent amination of UTP to CTP with either L-glutamine or ammonia as the source of nitrogen. Regulates intracellular CTP levels through interactions with the four ribonucleotide triphosphates.</text>
</comment>
<comment type="catalytic activity">
    <reaction evidence="1">
        <text>UTP + L-glutamine + ATP + H2O = CTP + L-glutamate + ADP + phosphate + 2 H(+)</text>
        <dbReference type="Rhea" id="RHEA:26426"/>
        <dbReference type="ChEBI" id="CHEBI:15377"/>
        <dbReference type="ChEBI" id="CHEBI:15378"/>
        <dbReference type="ChEBI" id="CHEBI:29985"/>
        <dbReference type="ChEBI" id="CHEBI:30616"/>
        <dbReference type="ChEBI" id="CHEBI:37563"/>
        <dbReference type="ChEBI" id="CHEBI:43474"/>
        <dbReference type="ChEBI" id="CHEBI:46398"/>
        <dbReference type="ChEBI" id="CHEBI:58359"/>
        <dbReference type="ChEBI" id="CHEBI:456216"/>
        <dbReference type="EC" id="6.3.4.2"/>
    </reaction>
</comment>
<comment type="catalytic activity">
    <reaction evidence="1">
        <text>L-glutamine + H2O = L-glutamate + NH4(+)</text>
        <dbReference type="Rhea" id="RHEA:15889"/>
        <dbReference type="ChEBI" id="CHEBI:15377"/>
        <dbReference type="ChEBI" id="CHEBI:28938"/>
        <dbReference type="ChEBI" id="CHEBI:29985"/>
        <dbReference type="ChEBI" id="CHEBI:58359"/>
    </reaction>
</comment>
<comment type="catalytic activity">
    <reaction evidence="1">
        <text>UTP + NH4(+) + ATP = CTP + ADP + phosphate + 2 H(+)</text>
        <dbReference type="Rhea" id="RHEA:16597"/>
        <dbReference type="ChEBI" id="CHEBI:15378"/>
        <dbReference type="ChEBI" id="CHEBI:28938"/>
        <dbReference type="ChEBI" id="CHEBI:30616"/>
        <dbReference type="ChEBI" id="CHEBI:37563"/>
        <dbReference type="ChEBI" id="CHEBI:43474"/>
        <dbReference type="ChEBI" id="CHEBI:46398"/>
        <dbReference type="ChEBI" id="CHEBI:456216"/>
    </reaction>
</comment>
<comment type="activity regulation">
    <text evidence="1">Allosterically activated by GTP, when glutamine is the substrate; GTP has no effect on the reaction when ammonia is the substrate. The allosteric effector GTP functions by stabilizing the protein conformation that binds the tetrahedral intermediate(s) formed during glutamine hydrolysis. Inhibited by the product CTP, via allosteric rather than competitive inhibition.</text>
</comment>
<comment type="pathway">
    <text evidence="1">Pyrimidine metabolism; CTP biosynthesis via de novo pathway; CTP from UDP: step 2/2.</text>
</comment>
<comment type="subunit">
    <text evidence="1">Homotetramer.</text>
</comment>
<comment type="miscellaneous">
    <text evidence="1">CTPSs have evolved a hybrid strategy for distinguishing between UTP and CTP. The overlapping regions of the product feedback inhibitory and substrate sites recognize a common feature in both compounds, the triphosphate moiety. To differentiate isosteric substrate and product pyrimidine rings, an additional pocket far from the expected kinase/ligase catalytic site, specifically recognizes the cytosine and ribose portions of the product inhibitor.</text>
</comment>
<comment type="similarity">
    <text evidence="1">Belongs to the CTP synthase family.</text>
</comment>
<evidence type="ECO:0000255" key="1">
    <source>
        <dbReference type="HAMAP-Rule" id="MF_01227"/>
    </source>
</evidence>
<proteinExistence type="inferred from homology"/>
<name>PYRG_BACC1</name>
<keyword id="KW-0067">ATP-binding</keyword>
<keyword id="KW-0315">Glutamine amidotransferase</keyword>
<keyword id="KW-0436">Ligase</keyword>
<keyword id="KW-0460">Magnesium</keyword>
<keyword id="KW-0479">Metal-binding</keyword>
<keyword id="KW-0547">Nucleotide-binding</keyword>
<keyword id="KW-0665">Pyrimidine biosynthesis</keyword>
<gene>
    <name evidence="1" type="primary">pyrG</name>
    <name type="synonym">ctrA</name>
    <name type="ordered locus">BCE_5468</name>
</gene>
<reference key="1">
    <citation type="journal article" date="2004" name="Nucleic Acids Res.">
        <title>The genome sequence of Bacillus cereus ATCC 10987 reveals metabolic adaptations and a large plasmid related to Bacillus anthracis pXO1.</title>
        <authorList>
            <person name="Rasko D.A."/>
            <person name="Ravel J."/>
            <person name="Oekstad O.A."/>
            <person name="Helgason E."/>
            <person name="Cer R.Z."/>
            <person name="Jiang L."/>
            <person name="Shores K.A."/>
            <person name="Fouts D.E."/>
            <person name="Tourasse N.J."/>
            <person name="Angiuoli S.V."/>
            <person name="Kolonay J.F."/>
            <person name="Nelson W.C."/>
            <person name="Kolstoe A.-B."/>
            <person name="Fraser C.M."/>
            <person name="Read T.D."/>
        </authorList>
    </citation>
    <scope>NUCLEOTIDE SEQUENCE [LARGE SCALE GENOMIC DNA]</scope>
    <source>
        <strain>ATCC 10987 / NRS 248</strain>
    </source>
</reference>
<protein>
    <recommendedName>
        <fullName evidence="1">CTP synthase</fullName>
        <ecNumber evidence="1">6.3.4.2</ecNumber>
    </recommendedName>
    <alternativeName>
        <fullName evidence="1">Cytidine 5'-triphosphate synthase</fullName>
    </alternativeName>
    <alternativeName>
        <fullName evidence="1">Cytidine triphosphate synthetase</fullName>
        <shortName evidence="1">CTP synthetase</shortName>
        <shortName evidence="1">CTPS</shortName>
    </alternativeName>
    <alternativeName>
        <fullName evidence="1">UTP--ammonia ligase</fullName>
    </alternativeName>
</protein>
<dbReference type="EC" id="6.3.4.2" evidence="1"/>
<dbReference type="EMBL" id="AE017194">
    <property type="protein sequence ID" value="AAS44368.1"/>
    <property type="molecule type" value="Genomic_DNA"/>
</dbReference>
<dbReference type="SMR" id="Q72XB0"/>
<dbReference type="MEROPS" id="C26.964"/>
<dbReference type="KEGG" id="bca:BCE_5468"/>
<dbReference type="HOGENOM" id="CLU_011675_5_0_9"/>
<dbReference type="UniPathway" id="UPA00159">
    <property type="reaction ID" value="UER00277"/>
</dbReference>
<dbReference type="Proteomes" id="UP000002527">
    <property type="component" value="Chromosome"/>
</dbReference>
<dbReference type="GO" id="GO:0005829">
    <property type="term" value="C:cytosol"/>
    <property type="evidence" value="ECO:0007669"/>
    <property type="project" value="TreeGrafter"/>
</dbReference>
<dbReference type="GO" id="GO:0005524">
    <property type="term" value="F:ATP binding"/>
    <property type="evidence" value="ECO:0007669"/>
    <property type="project" value="UniProtKB-KW"/>
</dbReference>
<dbReference type="GO" id="GO:0003883">
    <property type="term" value="F:CTP synthase activity"/>
    <property type="evidence" value="ECO:0007669"/>
    <property type="project" value="UniProtKB-UniRule"/>
</dbReference>
<dbReference type="GO" id="GO:0004359">
    <property type="term" value="F:glutaminase activity"/>
    <property type="evidence" value="ECO:0007669"/>
    <property type="project" value="RHEA"/>
</dbReference>
<dbReference type="GO" id="GO:0042802">
    <property type="term" value="F:identical protein binding"/>
    <property type="evidence" value="ECO:0007669"/>
    <property type="project" value="TreeGrafter"/>
</dbReference>
<dbReference type="GO" id="GO:0046872">
    <property type="term" value="F:metal ion binding"/>
    <property type="evidence" value="ECO:0007669"/>
    <property type="project" value="UniProtKB-KW"/>
</dbReference>
<dbReference type="GO" id="GO:0044210">
    <property type="term" value="P:'de novo' CTP biosynthetic process"/>
    <property type="evidence" value="ECO:0007669"/>
    <property type="project" value="UniProtKB-UniRule"/>
</dbReference>
<dbReference type="GO" id="GO:0019856">
    <property type="term" value="P:pyrimidine nucleobase biosynthetic process"/>
    <property type="evidence" value="ECO:0007669"/>
    <property type="project" value="TreeGrafter"/>
</dbReference>
<dbReference type="CDD" id="cd03113">
    <property type="entry name" value="CTPS_N"/>
    <property type="match status" value="1"/>
</dbReference>
<dbReference type="CDD" id="cd01746">
    <property type="entry name" value="GATase1_CTP_Synthase"/>
    <property type="match status" value="1"/>
</dbReference>
<dbReference type="FunFam" id="3.40.50.300:FF:000009">
    <property type="entry name" value="CTP synthase"/>
    <property type="match status" value="1"/>
</dbReference>
<dbReference type="FunFam" id="3.40.50.880:FF:000002">
    <property type="entry name" value="CTP synthase"/>
    <property type="match status" value="1"/>
</dbReference>
<dbReference type="Gene3D" id="3.40.50.880">
    <property type="match status" value="1"/>
</dbReference>
<dbReference type="Gene3D" id="3.40.50.300">
    <property type="entry name" value="P-loop containing nucleotide triphosphate hydrolases"/>
    <property type="match status" value="1"/>
</dbReference>
<dbReference type="HAMAP" id="MF_01227">
    <property type="entry name" value="PyrG"/>
    <property type="match status" value="1"/>
</dbReference>
<dbReference type="InterPro" id="IPR029062">
    <property type="entry name" value="Class_I_gatase-like"/>
</dbReference>
<dbReference type="InterPro" id="IPR004468">
    <property type="entry name" value="CTP_synthase"/>
</dbReference>
<dbReference type="InterPro" id="IPR017456">
    <property type="entry name" value="CTP_synthase_N"/>
</dbReference>
<dbReference type="InterPro" id="IPR017926">
    <property type="entry name" value="GATASE"/>
</dbReference>
<dbReference type="InterPro" id="IPR033828">
    <property type="entry name" value="GATase1_CTP_Synthase"/>
</dbReference>
<dbReference type="InterPro" id="IPR027417">
    <property type="entry name" value="P-loop_NTPase"/>
</dbReference>
<dbReference type="NCBIfam" id="NF003792">
    <property type="entry name" value="PRK05380.1"/>
    <property type="match status" value="1"/>
</dbReference>
<dbReference type="NCBIfam" id="TIGR00337">
    <property type="entry name" value="PyrG"/>
    <property type="match status" value="1"/>
</dbReference>
<dbReference type="PANTHER" id="PTHR11550">
    <property type="entry name" value="CTP SYNTHASE"/>
    <property type="match status" value="1"/>
</dbReference>
<dbReference type="PANTHER" id="PTHR11550:SF0">
    <property type="entry name" value="CTP SYNTHASE-RELATED"/>
    <property type="match status" value="1"/>
</dbReference>
<dbReference type="Pfam" id="PF06418">
    <property type="entry name" value="CTP_synth_N"/>
    <property type="match status" value="1"/>
</dbReference>
<dbReference type="Pfam" id="PF00117">
    <property type="entry name" value="GATase"/>
    <property type="match status" value="1"/>
</dbReference>
<dbReference type="SUPFAM" id="SSF52317">
    <property type="entry name" value="Class I glutamine amidotransferase-like"/>
    <property type="match status" value="1"/>
</dbReference>
<dbReference type="SUPFAM" id="SSF52540">
    <property type="entry name" value="P-loop containing nucleoside triphosphate hydrolases"/>
    <property type="match status" value="1"/>
</dbReference>
<dbReference type="PROSITE" id="PS51273">
    <property type="entry name" value="GATASE_TYPE_1"/>
    <property type="match status" value="1"/>
</dbReference>
<accession>Q72XB0</accession>
<sequence length="535" mass="59751">MTKYIFVTGGVVSSLGKGITAASLGRLLKNRGLNVTIQKFDPYINVDPGTMSPYQHGEVFVTDDGAETDLDLGHYERFIDINLNKYSNVTTGKIYSSVLQKERRGEYLGGTVQVIPHITNEIKERVYRSGRETNADVVITEIGGTVGDIESLPFLEAIRQIKSDIGRDNVMYIHCTLIPYLKAAGEMKTKPTQHSVKELRSLGIQPNIIVVRTEMPVSQDMKDKLALFCDIDTKAVIEARDADTLYAVPLSLQEQNMDQIVCDHLKLDNPAADMTEWTALVEKVRNLSKKTKIALVGKYVELQDAYISVVEALRHAGYSFDTDVEVKWVNAEHVTAENVQELVGDTDGILVPGGFGDRGVEGKIVAIQYARENKVPFLGICLGMQLASIEFARNVLGLEGANSSEINPDTPYAIIDLLPEQKDVEDLGGTLRLGLYPCKLAEETNAYNAYNEPVVYERHRHRYEFNNQFRPDMEKAGFVFSGTSPDGRLVEIVELKDHPWFVAAQFHPELVSRPNRPQPLFHDFVRASITNKESK</sequence>
<organism>
    <name type="scientific">Bacillus cereus (strain ATCC 10987 / NRS 248)</name>
    <dbReference type="NCBI Taxonomy" id="222523"/>
    <lineage>
        <taxon>Bacteria</taxon>
        <taxon>Bacillati</taxon>
        <taxon>Bacillota</taxon>
        <taxon>Bacilli</taxon>
        <taxon>Bacillales</taxon>
        <taxon>Bacillaceae</taxon>
        <taxon>Bacillus</taxon>
        <taxon>Bacillus cereus group</taxon>
    </lineage>
</organism>